<feature type="chain" id="PRO_1000192187" description="DNA mismatch repair protein MutL">
    <location>
        <begin position="1"/>
        <end position="568"/>
    </location>
</feature>
<proteinExistence type="inferred from homology"/>
<comment type="function">
    <text evidence="1">This protein is involved in the repair of mismatches in DNA. It is required for dam-dependent methyl-directed DNA mismatch repair. May act as a 'molecular matchmaker', a protein that promotes the formation of a stable complex between two or more DNA-binding proteins in an ATP-dependent manner without itself being part of a final effector complex.</text>
</comment>
<comment type="similarity">
    <text evidence="1">Belongs to the DNA mismatch repair MutL/HexB family.</text>
</comment>
<gene>
    <name evidence="1" type="primary">mutL</name>
    <name type="ordered locus">THA_1008</name>
</gene>
<protein>
    <recommendedName>
        <fullName evidence="1">DNA mismatch repair protein MutL</fullName>
    </recommendedName>
</protein>
<keyword id="KW-0227">DNA damage</keyword>
<keyword id="KW-0234">DNA repair</keyword>
<keyword id="KW-1185">Reference proteome</keyword>
<sequence>MGKIKKLPEHVIGKIAAGEVVAGPYSVVKELVENSLDAGATKIEIEIKSGGKSYIKVKDNGEGMGREDLLLSIYEHTTSKINDFDDIYNLSSFGFRGEALASIAKVSRIVITSNNGSESHRLEAIGGKIKSVNEYPLVEKGTIVEVYDLFFNVPARRKFLKSEATEKRYVVEYVEKFLLSNPDVEFIFRADNEIIYNARASNLEERFKLIFPEVKEYTLINGKYVEGIISSPNYHRKNRTGQIFFVQKRFVMDKMLYYIFENGYGEALVDHPYGVLFINVPSKLVDVNVHPQKLEVKFSNPNIIYSDITRTVREALKKFVSKQIFVKPINEKKTKSEVSSFETKNVNFSNDSFQDKFNSVFKESVNHVDYSKNMLFDISEKNLEVKNDVVILKKRYVLFEMEDGIYIMDFHAAHERVIYEQILEKLKVGIEKIDLIIPIEIKVGKSLKQIVIEKLDELKENGFEIKVENESVKILSIPSFIKPSDVDDIFKEIIDEYRIPSMGTKNMKHIIADKACKSAVRTGYDITEGEAKKLIEEVFKRNLTTCPHGRPLFLKITFNEIDKYFDRT</sequence>
<accession>B7IHA2</accession>
<evidence type="ECO:0000255" key="1">
    <source>
        <dbReference type="HAMAP-Rule" id="MF_00149"/>
    </source>
</evidence>
<name>MUTL_THEAB</name>
<reference key="1">
    <citation type="journal article" date="2009" name="J. Bacteriol.">
        <title>The genome of Thermosipho africanus TCF52B: lateral genetic connections to the Firmicutes and Archaea.</title>
        <authorList>
            <person name="Nesboe C.L."/>
            <person name="Bapteste E."/>
            <person name="Curtis B."/>
            <person name="Dahle H."/>
            <person name="Lopez P."/>
            <person name="Macleod D."/>
            <person name="Dlutek M."/>
            <person name="Bowman S."/>
            <person name="Zhaxybayeva O."/>
            <person name="Birkeland N.-K."/>
            <person name="Doolittle W.F."/>
        </authorList>
    </citation>
    <scope>NUCLEOTIDE SEQUENCE [LARGE SCALE GENOMIC DNA]</scope>
    <source>
        <strain>TCF52B</strain>
    </source>
</reference>
<organism>
    <name type="scientific">Thermosipho africanus (strain TCF52B)</name>
    <dbReference type="NCBI Taxonomy" id="484019"/>
    <lineage>
        <taxon>Bacteria</taxon>
        <taxon>Thermotogati</taxon>
        <taxon>Thermotogota</taxon>
        <taxon>Thermotogae</taxon>
        <taxon>Thermotogales</taxon>
        <taxon>Fervidobacteriaceae</taxon>
        <taxon>Thermosipho</taxon>
    </lineage>
</organism>
<dbReference type="EMBL" id="CP001185">
    <property type="protein sequence ID" value="ACJ75466.1"/>
    <property type="molecule type" value="Genomic_DNA"/>
</dbReference>
<dbReference type="RefSeq" id="WP_012579927.1">
    <property type="nucleotide sequence ID" value="NC_011653.1"/>
</dbReference>
<dbReference type="SMR" id="B7IHA2"/>
<dbReference type="STRING" id="484019.THA_1008"/>
<dbReference type="KEGG" id="taf:THA_1008"/>
<dbReference type="eggNOG" id="COG0323">
    <property type="taxonomic scope" value="Bacteria"/>
</dbReference>
<dbReference type="HOGENOM" id="CLU_004131_4_3_0"/>
<dbReference type="OrthoDB" id="9763467at2"/>
<dbReference type="Proteomes" id="UP000002453">
    <property type="component" value="Chromosome"/>
</dbReference>
<dbReference type="GO" id="GO:0032300">
    <property type="term" value="C:mismatch repair complex"/>
    <property type="evidence" value="ECO:0007669"/>
    <property type="project" value="InterPro"/>
</dbReference>
<dbReference type="GO" id="GO:0005524">
    <property type="term" value="F:ATP binding"/>
    <property type="evidence" value="ECO:0007669"/>
    <property type="project" value="InterPro"/>
</dbReference>
<dbReference type="GO" id="GO:0016887">
    <property type="term" value="F:ATP hydrolysis activity"/>
    <property type="evidence" value="ECO:0007669"/>
    <property type="project" value="InterPro"/>
</dbReference>
<dbReference type="GO" id="GO:0140664">
    <property type="term" value="F:ATP-dependent DNA damage sensor activity"/>
    <property type="evidence" value="ECO:0007669"/>
    <property type="project" value="InterPro"/>
</dbReference>
<dbReference type="GO" id="GO:0030983">
    <property type="term" value="F:mismatched DNA binding"/>
    <property type="evidence" value="ECO:0007669"/>
    <property type="project" value="InterPro"/>
</dbReference>
<dbReference type="GO" id="GO:0006298">
    <property type="term" value="P:mismatch repair"/>
    <property type="evidence" value="ECO:0007669"/>
    <property type="project" value="UniProtKB-UniRule"/>
</dbReference>
<dbReference type="CDD" id="cd16926">
    <property type="entry name" value="HATPase_MutL-MLH-PMS-like"/>
    <property type="match status" value="1"/>
</dbReference>
<dbReference type="CDD" id="cd00782">
    <property type="entry name" value="MutL_Trans"/>
    <property type="match status" value="1"/>
</dbReference>
<dbReference type="FunFam" id="3.30.565.10:FF:000003">
    <property type="entry name" value="DNA mismatch repair endonuclease MutL"/>
    <property type="match status" value="1"/>
</dbReference>
<dbReference type="Gene3D" id="3.30.230.10">
    <property type="match status" value="1"/>
</dbReference>
<dbReference type="Gene3D" id="3.30.565.10">
    <property type="entry name" value="Histidine kinase-like ATPase, C-terminal domain"/>
    <property type="match status" value="1"/>
</dbReference>
<dbReference type="Gene3D" id="3.30.1540.20">
    <property type="entry name" value="MutL, C-terminal domain, dimerisation subdomain"/>
    <property type="match status" value="1"/>
</dbReference>
<dbReference type="Gene3D" id="3.30.1370.100">
    <property type="entry name" value="MutL, C-terminal domain, regulatory subdomain"/>
    <property type="match status" value="1"/>
</dbReference>
<dbReference type="HAMAP" id="MF_00149">
    <property type="entry name" value="DNA_mis_repair"/>
    <property type="match status" value="1"/>
</dbReference>
<dbReference type="InterPro" id="IPR014762">
    <property type="entry name" value="DNA_mismatch_repair_CS"/>
</dbReference>
<dbReference type="InterPro" id="IPR020667">
    <property type="entry name" value="DNA_mismatch_repair_MutL"/>
</dbReference>
<dbReference type="InterPro" id="IPR013507">
    <property type="entry name" value="DNA_mismatch_S5_2-like"/>
</dbReference>
<dbReference type="InterPro" id="IPR036890">
    <property type="entry name" value="HATPase_C_sf"/>
</dbReference>
<dbReference type="InterPro" id="IPR002099">
    <property type="entry name" value="MutL/Mlh/PMS"/>
</dbReference>
<dbReference type="InterPro" id="IPR038973">
    <property type="entry name" value="MutL/Mlh/Pms-like"/>
</dbReference>
<dbReference type="InterPro" id="IPR014790">
    <property type="entry name" value="MutL_C"/>
</dbReference>
<dbReference type="InterPro" id="IPR042120">
    <property type="entry name" value="MutL_C_dimsub"/>
</dbReference>
<dbReference type="InterPro" id="IPR042121">
    <property type="entry name" value="MutL_C_regsub"/>
</dbReference>
<dbReference type="InterPro" id="IPR037198">
    <property type="entry name" value="MutL_C_sf"/>
</dbReference>
<dbReference type="InterPro" id="IPR020568">
    <property type="entry name" value="Ribosomal_Su5_D2-typ_SF"/>
</dbReference>
<dbReference type="InterPro" id="IPR014721">
    <property type="entry name" value="Ribsml_uS5_D2-typ_fold_subgr"/>
</dbReference>
<dbReference type="NCBIfam" id="TIGR00585">
    <property type="entry name" value="mutl"/>
    <property type="match status" value="1"/>
</dbReference>
<dbReference type="PANTHER" id="PTHR10073">
    <property type="entry name" value="DNA MISMATCH REPAIR PROTEIN MLH, PMS, MUTL"/>
    <property type="match status" value="1"/>
</dbReference>
<dbReference type="PANTHER" id="PTHR10073:SF12">
    <property type="entry name" value="DNA MISMATCH REPAIR PROTEIN MLH1"/>
    <property type="match status" value="1"/>
</dbReference>
<dbReference type="Pfam" id="PF01119">
    <property type="entry name" value="DNA_mis_repair"/>
    <property type="match status" value="1"/>
</dbReference>
<dbReference type="Pfam" id="PF13589">
    <property type="entry name" value="HATPase_c_3"/>
    <property type="match status" value="1"/>
</dbReference>
<dbReference type="Pfam" id="PF08676">
    <property type="entry name" value="MutL_C"/>
    <property type="match status" value="1"/>
</dbReference>
<dbReference type="SMART" id="SM01340">
    <property type="entry name" value="DNA_mis_repair"/>
    <property type="match status" value="1"/>
</dbReference>
<dbReference type="SMART" id="SM00853">
    <property type="entry name" value="MutL_C"/>
    <property type="match status" value="1"/>
</dbReference>
<dbReference type="SUPFAM" id="SSF55874">
    <property type="entry name" value="ATPase domain of HSP90 chaperone/DNA topoisomerase II/histidine kinase"/>
    <property type="match status" value="1"/>
</dbReference>
<dbReference type="SUPFAM" id="SSF118116">
    <property type="entry name" value="DNA mismatch repair protein MutL"/>
    <property type="match status" value="1"/>
</dbReference>
<dbReference type="SUPFAM" id="SSF54211">
    <property type="entry name" value="Ribosomal protein S5 domain 2-like"/>
    <property type="match status" value="1"/>
</dbReference>
<dbReference type="PROSITE" id="PS00058">
    <property type="entry name" value="DNA_MISMATCH_REPAIR_1"/>
    <property type="match status" value="1"/>
</dbReference>